<name>S2512_RAT</name>
<proteinExistence type="inferred from homology"/>
<evidence type="ECO:0000250" key="1">
    <source>
        <dbReference type="UniProtKB" id="O75746"/>
    </source>
</evidence>
<evidence type="ECO:0000255" key="2"/>
<evidence type="ECO:0000255" key="3">
    <source>
        <dbReference type="PROSITE-ProRule" id="PRU00282"/>
    </source>
</evidence>
<evidence type="ECO:0000255" key="4">
    <source>
        <dbReference type="PROSITE-ProRule" id="PRU00448"/>
    </source>
</evidence>
<evidence type="ECO:0000269" key="5">
    <source>
    </source>
</evidence>
<evidence type="ECO:0000269" key="6">
    <source>
    </source>
</evidence>
<evidence type="ECO:0000305" key="7"/>
<evidence type="ECO:0000305" key="8">
    <source>
    </source>
</evidence>
<evidence type="ECO:0000305" key="9">
    <source>
    </source>
</evidence>
<evidence type="ECO:0000312" key="10">
    <source>
        <dbReference type="Proteomes" id="UP000002494"/>
    </source>
</evidence>
<evidence type="ECO:0000312" key="11">
    <source>
        <dbReference type="RGD" id="1305181"/>
    </source>
</evidence>
<keyword id="KW-0007">Acetylation</keyword>
<keyword id="KW-0106">Calcium</keyword>
<keyword id="KW-0472">Membrane</keyword>
<keyword id="KW-0479">Metal-binding</keyword>
<keyword id="KW-0496">Mitochondrion</keyword>
<keyword id="KW-0999">Mitochondrion inner membrane</keyword>
<keyword id="KW-1185">Reference proteome</keyword>
<keyword id="KW-0677">Repeat</keyword>
<keyword id="KW-0812">Transmembrane</keyword>
<keyword id="KW-1133">Transmembrane helix</keyword>
<keyword id="KW-0813">Transport</keyword>
<gene>
    <name evidence="11" type="primary">Slc25a12</name>
</gene>
<reference key="1">
    <citation type="journal article" date="2004" name="Nature">
        <title>Genome sequence of the Brown Norway rat yields insights into mammalian evolution.</title>
        <authorList>
            <person name="Gibbs R.A."/>
            <person name="Weinstock G.M."/>
            <person name="Metzker M.L."/>
            <person name="Muzny D.M."/>
            <person name="Sodergren E.J."/>
            <person name="Scherer S."/>
            <person name="Scott G."/>
            <person name="Steffen D."/>
            <person name="Worley K.C."/>
            <person name="Burch P.E."/>
            <person name="Okwuonu G."/>
            <person name="Hines S."/>
            <person name="Lewis L."/>
            <person name="Deramo C."/>
            <person name="Delgado O."/>
            <person name="Dugan-Rocha S."/>
            <person name="Miner G."/>
            <person name="Morgan M."/>
            <person name="Hawes A."/>
            <person name="Gill R."/>
            <person name="Holt R.A."/>
            <person name="Adams M.D."/>
            <person name="Amanatides P.G."/>
            <person name="Baden-Tillson H."/>
            <person name="Barnstead M."/>
            <person name="Chin S."/>
            <person name="Evans C.A."/>
            <person name="Ferriera S."/>
            <person name="Fosler C."/>
            <person name="Glodek A."/>
            <person name="Gu Z."/>
            <person name="Jennings D."/>
            <person name="Kraft C.L."/>
            <person name="Nguyen T."/>
            <person name="Pfannkoch C.M."/>
            <person name="Sitter C."/>
            <person name="Sutton G.G."/>
            <person name="Venter J.C."/>
            <person name="Woodage T."/>
            <person name="Smith D."/>
            <person name="Lee H.-M."/>
            <person name="Gustafson E."/>
            <person name="Cahill P."/>
            <person name="Kana A."/>
            <person name="Doucette-Stamm L."/>
            <person name="Weinstock K."/>
            <person name="Fechtel K."/>
            <person name="Weiss R.B."/>
            <person name="Dunn D.M."/>
            <person name="Green E.D."/>
            <person name="Blakesley R.W."/>
            <person name="Bouffard G.G."/>
            <person name="De Jong P.J."/>
            <person name="Osoegawa K."/>
            <person name="Zhu B."/>
            <person name="Marra M."/>
            <person name="Schein J."/>
            <person name="Bosdet I."/>
            <person name="Fjell C."/>
            <person name="Jones S."/>
            <person name="Krzywinski M."/>
            <person name="Mathewson C."/>
            <person name="Siddiqui A."/>
            <person name="Wye N."/>
            <person name="McPherson J."/>
            <person name="Zhao S."/>
            <person name="Fraser C.M."/>
            <person name="Shetty J."/>
            <person name="Shatsman S."/>
            <person name="Geer K."/>
            <person name="Chen Y."/>
            <person name="Abramzon S."/>
            <person name="Nierman W.C."/>
            <person name="Havlak P.H."/>
            <person name="Chen R."/>
            <person name="Durbin K.J."/>
            <person name="Egan A."/>
            <person name="Ren Y."/>
            <person name="Song X.-Z."/>
            <person name="Li B."/>
            <person name="Liu Y."/>
            <person name="Qin X."/>
            <person name="Cawley S."/>
            <person name="Cooney A.J."/>
            <person name="D'Souza L.M."/>
            <person name="Martin K."/>
            <person name="Wu J.Q."/>
            <person name="Gonzalez-Garay M.L."/>
            <person name="Jackson A.R."/>
            <person name="Kalafus K.J."/>
            <person name="McLeod M.P."/>
            <person name="Milosavljevic A."/>
            <person name="Virk D."/>
            <person name="Volkov A."/>
            <person name="Wheeler D.A."/>
            <person name="Zhang Z."/>
            <person name="Bailey J.A."/>
            <person name="Eichler E.E."/>
            <person name="Tuzun E."/>
            <person name="Birney E."/>
            <person name="Mongin E."/>
            <person name="Ureta-Vidal A."/>
            <person name="Woodwark C."/>
            <person name="Zdobnov E."/>
            <person name="Bork P."/>
            <person name="Suyama M."/>
            <person name="Torrents D."/>
            <person name="Alexandersson M."/>
            <person name="Trask B.J."/>
            <person name="Young J.M."/>
            <person name="Huang H."/>
            <person name="Wang H."/>
            <person name="Xing H."/>
            <person name="Daniels S."/>
            <person name="Gietzen D."/>
            <person name="Schmidt J."/>
            <person name="Stevens K."/>
            <person name="Vitt U."/>
            <person name="Wingrove J."/>
            <person name="Camara F."/>
            <person name="Mar Alba M."/>
            <person name="Abril J.F."/>
            <person name="Guigo R."/>
            <person name="Smit A."/>
            <person name="Dubchak I."/>
            <person name="Rubin E.M."/>
            <person name="Couronne O."/>
            <person name="Poliakov A."/>
            <person name="Huebner N."/>
            <person name="Ganten D."/>
            <person name="Goesele C."/>
            <person name="Hummel O."/>
            <person name="Kreitler T."/>
            <person name="Lee Y.-A."/>
            <person name="Monti J."/>
            <person name="Schulz H."/>
            <person name="Zimdahl H."/>
            <person name="Himmelbauer H."/>
            <person name="Lehrach H."/>
            <person name="Jacob H.J."/>
            <person name="Bromberg S."/>
            <person name="Gullings-Handley J."/>
            <person name="Jensen-Seaman M.I."/>
            <person name="Kwitek A.E."/>
            <person name="Lazar J."/>
            <person name="Pasko D."/>
            <person name="Tonellato P.J."/>
            <person name="Twigger S."/>
            <person name="Ponting C.P."/>
            <person name="Duarte J.M."/>
            <person name="Rice S."/>
            <person name="Goodstadt L."/>
            <person name="Beatson S.A."/>
            <person name="Emes R.D."/>
            <person name="Winter E.E."/>
            <person name="Webber C."/>
            <person name="Brandt P."/>
            <person name="Nyakatura G."/>
            <person name="Adetobi M."/>
            <person name="Chiaromonte F."/>
            <person name="Elnitski L."/>
            <person name="Eswara P."/>
            <person name="Hardison R.C."/>
            <person name="Hou M."/>
            <person name="Kolbe D."/>
            <person name="Makova K."/>
            <person name="Miller W."/>
            <person name="Nekrutenko A."/>
            <person name="Riemer C."/>
            <person name="Schwartz S."/>
            <person name="Taylor J."/>
            <person name="Yang S."/>
            <person name="Zhang Y."/>
            <person name="Lindpaintner K."/>
            <person name="Andrews T.D."/>
            <person name="Caccamo M."/>
            <person name="Clamp M."/>
            <person name="Clarke L."/>
            <person name="Curwen V."/>
            <person name="Durbin R.M."/>
            <person name="Eyras E."/>
            <person name="Searle S.M."/>
            <person name="Cooper G.M."/>
            <person name="Batzoglou S."/>
            <person name="Brudno M."/>
            <person name="Sidow A."/>
            <person name="Stone E.A."/>
            <person name="Payseur B.A."/>
            <person name="Bourque G."/>
            <person name="Lopez-Otin C."/>
            <person name="Puente X.S."/>
            <person name="Chakrabarti K."/>
            <person name="Chatterji S."/>
            <person name="Dewey C."/>
            <person name="Pachter L."/>
            <person name="Bray N."/>
            <person name="Yap V.B."/>
            <person name="Caspi A."/>
            <person name="Tesler G."/>
            <person name="Pevzner P.A."/>
            <person name="Haussler D."/>
            <person name="Roskin K.M."/>
            <person name="Baertsch R."/>
            <person name="Clawson H."/>
            <person name="Furey T.S."/>
            <person name="Hinrichs A.S."/>
            <person name="Karolchik D."/>
            <person name="Kent W.J."/>
            <person name="Rosenbloom K.R."/>
            <person name="Trumbower H."/>
            <person name="Weirauch M."/>
            <person name="Cooper D.N."/>
            <person name="Stenson P.D."/>
            <person name="Ma B."/>
            <person name="Brent M."/>
            <person name="Arumugam M."/>
            <person name="Shteynberg D."/>
            <person name="Copley R.R."/>
            <person name="Taylor M.S."/>
            <person name="Riethman H."/>
            <person name="Mudunuri U."/>
            <person name="Peterson J."/>
            <person name="Guyer M."/>
            <person name="Felsenfeld A."/>
            <person name="Old S."/>
            <person name="Mockrin S."/>
            <person name="Collins F.S."/>
        </authorList>
    </citation>
    <scope>NUCLEOTIDE SEQUENCE [LARGE SCALE GENOMIC DNA]</scope>
    <source>
        <strain>Brown Norway</strain>
    </source>
</reference>
<reference key="2">
    <citation type="journal article" date="1974" name="J. Biol. Chem.">
        <title>Electrogenic characteristics of the mitochondrial glutamate-aspartate antiporter.</title>
        <authorList>
            <person name="LaNoue K.F."/>
            <person name="Tischler M.E."/>
        </authorList>
    </citation>
    <scope>FUNCTION</scope>
    <scope>TRANSPORTER ACTIVITY</scope>
    <scope>SUBCELLULAR LOCATION</scope>
</reference>
<reference key="3">
    <citation type="journal article" date="1979" name="Biochim. Biophys. Acta">
        <title>The transport of L-cysteinesulfinate in rat liver mitochondria.</title>
        <authorList>
            <person name="Palmieri F."/>
            <person name="Stipani I."/>
            <person name="Iacobazzi V."/>
        </authorList>
    </citation>
    <scope>FUNCTION</scope>
    <scope>TRANSPORTER ACTIVITY</scope>
    <scope>ACTIVITY REGULATION</scope>
    <scope>SUBCELLULAR LOCATION</scope>
</reference>
<accession>F1LX07</accession>
<organism evidence="10">
    <name type="scientific">Rattus norvegicus</name>
    <name type="common">Rat</name>
    <dbReference type="NCBI Taxonomy" id="10116"/>
    <lineage>
        <taxon>Eukaryota</taxon>
        <taxon>Metazoa</taxon>
        <taxon>Chordata</taxon>
        <taxon>Craniata</taxon>
        <taxon>Vertebrata</taxon>
        <taxon>Euteleostomi</taxon>
        <taxon>Mammalia</taxon>
        <taxon>Eutheria</taxon>
        <taxon>Euarchontoglires</taxon>
        <taxon>Glires</taxon>
        <taxon>Rodentia</taxon>
        <taxon>Myomorpha</taxon>
        <taxon>Muroidea</taxon>
        <taxon>Muridae</taxon>
        <taxon>Murinae</taxon>
        <taxon>Rattus</taxon>
    </lineage>
</organism>
<dbReference type="EMBL" id="AABR07052490">
    <property type="status" value="NOT_ANNOTATED_CDS"/>
    <property type="molecule type" value="Genomic_DNA"/>
</dbReference>
<dbReference type="EMBL" id="AABR07052491">
    <property type="status" value="NOT_ANNOTATED_CDS"/>
    <property type="molecule type" value="Genomic_DNA"/>
</dbReference>
<dbReference type="EMBL" id="AABR07052492">
    <property type="status" value="NOT_ANNOTATED_CDS"/>
    <property type="molecule type" value="Genomic_DNA"/>
</dbReference>
<dbReference type="EMBL" id="AABR07052493">
    <property type="status" value="NOT_ANNOTATED_CDS"/>
    <property type="molecule type" value="Genomic_DNA"/>
</dbReference>
<dbReference type="EMBL" id="AABR07052494">
    <property type="status" value="NOT_ANNOTATED_CDS"/>
    <property type="molecule type" value="Genomic_DNA"/>
</dbReference>
<dbReference type="EMBL" id="AABR07052495">
    <property type="status" value="NOT_ANNOTATED_CDS"/>
    <property type="molecule type" value="Genomic_DNA"/>
</dbReference>
<dbReference type="EMBL" id="AABR07072871">
    <property type="status" value="NOT_ANNOTATED_CDS"/>
    <property type="molecule type" value="Genomic_DNA"/>
</dbReference>
<dbReference type="EMBL" id="AC107446">
    <property type="status" value="NOT_ANNOTATED_CDS"/>
    <property type="molecule type" value="Genomic_DNA"/>
</dbReference>
<dbReference type="SMR" id="F1LX07"/>
<dbReference type="FunCoup" id="F1LX07">
    <property type="interactions" value="1946"/>
</dbReference>
<dbReference type="STRING" id="10116.ENSRNOP00000032909"/>
<dbReference type="GlyGen" id="F1LX07">
    <property type="glycosylation" value="1 site, 1 O-linked glycan (1 site)"/>
</dbReference>
<dbReference type="PhosphoSitePlus" id="F1LX07"/>
<dbReference type="jPOST" id="F1LX07"/>
<dbReference type="PaxDb" id="10116-ENSRNOP00000032909"/>
<dbReference type="PeptideAtlas" id="F1LX07"/>
<dbReference type="AGR" id="RGD:1305181"/>
<dbReference type="RGD" id="1305181">
    <property type="gene designation" value="Slc25a12"/>
</dbReference>
<dbReference type="VEuPathDB" id="HostDB:ENSRNOG00000022922"/>
<dbReference type="eggNOG" id="KOG0751">
    <property type="taxonomic scope" value="Eukaryota"/>
</dbReference>
<dbReference type="HOGENOM" id="CLU_014931_3_0_1"/>
<dbReference type="InParanoid" id="F1LX07"/>
<dbReference type="Reactome" id="R-RNO-8963693">
    <property type="pathway name" value="Aspartate and asparagine metabolism"/>
</dbReference>
<dbReference type="Reactome" id="R-RNO-9856872">
    <property type="pathway name" value="Malate-aspartate shuttle"/>
</dbReference>
<dbReference type="PRO" id="PR:F1LX07"/>
<dbReference type="Proteomes" id="UP000002494">
    <property type="component" value="Chromosome 3"/>
</dbReference>
<dbReference type="Bgee" id="ENSRNOG00000022922">
    <property type="expression patterns" value="Expressed in skeletal muscle tissue and 19 other cell types or tissues"/>
</dbReference>
<dbReference type="ExpressionAtlas" id="F1LX07">
    <property type="expression patterns" value="baseline and differential"/>
</dbReference>
<dbReference type="GO" id="GO:0005743">
    <property type="term" value="C:mitochondrial inner membrane"/>
    <property type="evidence" value="ECO:0000250"/>
    <property type="project" value="UniProtKB"/>
</dbReference>
<dbReference type="GO" id="GO:0005739">
    <property type="term" value="C:mitochondrion"/>
    <property type="evidence" value="ECO:0000266"/>
    <property type="project" value="RGD"/>
</dbReference>
<dbReference type="GO" id="GO:0000514">
    <property type="term" value="F:3-sulfino-L-alanine: proton, glutamate antiporter activity"/>
    <property type="evidence" value="ECO:0000250"/>
    <property type="project" value="UniProtKB"/>
</dbReference>
<dbReference type="GO" id="GO:0015172">
    <property type="term" value="F:acidic amino acid transmembrane transporter activity"/>
    <property type="evidence" value="ECO:0000266"/>
    <property type="project" value="RGD"/>
</dbReference>
<dbReference type="GO" id="GO:0000515">
    <property type="term" value="F:aspartate:glutamate, proton antiporter activity"/>
    <property type="evidence" value="ECO:0000250"/>
    <property type="project" value="UniProtKB"/>
</dbReference>
<dbReference type="GO" id="GO:0005509">
    <property type="term" value="F:calcium ion binding"/>
    <property type="evidence" value="ECO:0000266"/>
    <property type="project" value="RGD"/>
</dbReference>
<dbReference type="GO" id="GO:0042802">
    <property type="term" value="F:identical protein binding"/>
    <property type="evidence" value="ECO:0000266"/>
    <property type="project" value="RGD"/>
</dbReference>
<dbReference type="GO" id="GO:0015183">
    <property type="term" value="F:L-aspartate transmembrane transporter activity"/>
    <property type="evidence" value="ECO:0000318"/>
    <property type="project" value="GO_Central"/>
</dbReference>
<dbReference type="GO" id="GO:0005313">
    <property type="term" value="F:L-glutamate transmembrane transporter activity"/>
    <property type="evidence" value="ECO:0000318"/>
    <property type="project" value="GO_Central"/>
</dbReference>
<dbReference type="GO" id="GO:0015810">
    <property type="term" value="P:aspartate transmembrane transport"/>
    <property type="evidence" value="ECO:0000266"/>
    <property type="project" value="RGD"/>
</dbReference>
<dbReference type="GO" id="GO:0006537">
    <property type="term" value="P:glutamate biosynthetic process"/>
    <property type="evidence" value="ECO:0000315"/>
    <property type="project" value="RGD"/>
</dbReference>
<dbReference type="GO" id="GO:0015813">
    <property type="term" value="P:L-glutamate transmembrane transport"/>
    <property type="evidence" value="ECO:0000266"/>
    <property type="project" value="RGD"/>
</dbReference>
<dbReference type="GO" id="GO:0043490">
    <property type="term" value="P:malate-aspartate shuttle"/>
    <property type="evidence" value="ECO:0000315"/>
    <property type="project" value="RGD"/>
</dbReference>
<dbReference type="GO" id="GO:1904024">
    <property type="term" value="P:negative regulation of glucose catabolic process to lactate via pyruvate"/>
    <property type="evidence" value="ECO:0000315"/>
    <property type="project" value="RGD"/>
</dbReference>
<dbReference type="GO" id="GO:2001171">
    <property type="term" value="P:positive regulation of ATP biosynthetic process"/>
    <property type="evidence" value="ECO:0000315"/>
    <property type="project" value="RGD"/>
</dbReference>
<dbReference type="GO" id="GO:0010907">
    <property type="term" value="P:positive regulation of glucose metabolic process"/>
    <property type="evidence" value="ECO:0000315"/>
    <property type="project" value="RGD"/>
</dbReference>
<dbReference type="GO" id="GO:0031643">
    <property type="term" value="P:positive regulation of myelination"/>
    <property type="evidence" value="ECO:0000315"/>
    <property type="project" value="RGD"/>
</dbReference>
<dbReference type="GO" id="GO:0051592">
    <property type="term" value="P:response to calcium ion"/>
    <property type="evidence" value="ECO:0000266"/>
    <property type="project" value="RGD"/>
</dbReference>
<dbReference type="FunFam" id="1.50.40.10:FF:000004">
    <property type="entry name" value="Calcium-binding mitochondrial carrier protein Aralar1"/>
    <property type="match status" value="1"/>
</dbReference>
<dbReference type="FunFam" id="1.10.238.10:FF:000064">
    <property type="entry name" value="calcium-binding mitochondrial carrier protein Aralar1 isoform X1"/>
    <property type="match status" value="1"/>
</dbReference>
<dbReference type="Gene3D" id="1.10.238.10">
    <property type="entry name" value="EF-hand"/>
    <property type="match status" value="2"/>
</dbReference>
<dbReference type="Gene3D" id="1.50.40.10">
    <property type="entry name" value="Mitochondrial carrier domain"/>
    <property type="match status" value="1"/>
</dbReference>
<dbReference type="InterPro" id="IPR011992">
    <property type="entry name" value="EF-hand-dom_pair"/>
</dbReference>
<dbReference type="InterPro" id="IPR018247">
    <property type="entry name" value="EF_Hand_1_Ca_BS"/>
</dbReference>
<dbReference type="InterPro" id="IPR002048">
    <property type="entry name" value="EF_hand_dom"/>
</dbReference>
<dbReference type="InterPro" id="IPR002067">
    <property type="entry name" value="Mit_carrier"/>
</dbReference>
<dbReference type="InterPro" id="IPR051028">
    <property type="entry name" value="Mito_Solute_Carrier"/>
</dbReference>
<dbReference type="InterPro" id="IPR018108">
    <property type="entry name" value="Mitochondrial_sb/sol_carrier"/>
</dbReference>
<dbReference type="InterPro" id="IPR023395">
    <property type="entry name" value="Mt_carrier_dom_sf"/>
</dbReference>
<dbReference type="PANTHER" id="PTHR45678:SF7">
    <property type="entry name" value="ELECTROGENIC ASPARTATE_GLUTAMATE ANTIPORTER SLC25A12, MITOCHONDRIAL"/>
    <property type="match status" value="1"/>
</dbReference>
<dbReference type="PANTHER" id="PTHR45678">
    <property type="entry name" value="MITOCHONDRIAL 2-OXODICARBOXYLATE CARRIER 1-RELATED"/>
    <property type="match status" value="1"/>
</dbReference>
<dbReference type="Pfam" id="PF00153">
    <property type="entry name" value="Mito_carr"/>
    <property type="match status" value="3"/>
</dbReference>
<dbReference type="PRINTS" id="PR00926">
    <property type="entry name" value="MITOCARRIER"/>
</dbReference>
<dbReference type="SMART" id="SM00054">
    <property type="entry name" value="EFh"/>
    <property type="match status" value="3"/>
</dbReference>
<dbReference type="SUPFAM" id="SSF47473">
    <property type="entry name" value="EF-hand"/>
    <property type="match status" value="2"/>
</dbReference>
<dbReference type="SUPFAM" id="SSF103506">
    <property type="entry name" value="Mitochondrial carrier"/>
    <property type="match status" value="1"/>
</dbReference>
<dbReference type="PROSITE" id="PS00018">
    <property type="entry name" value="EF_HAND_1"/>
    <property type="match status" value="1"/>
</dbReference>
<dbReference type="PROSITE" id="PS50222">
    <property type="entry name" value="EF_HAND_2"/>
    <property type="match status" value="2"/>
</dbReference>
<dbReference type="PROSITE" id="PS50920">
    <property type="entry name" value="SOLCAR"/>
    <property type="match status" value="3"/>
</dbReference>
<feature type="initiator methionine" description="Removed" evidence="1">
    <location>
        <position position="1"/>
    </location>
</feature>
<feature type="chain" id="PRO_0000455803" description="Electrogenic aspartate/glutamate antiporter SLC25A12, mitochondrial">
    <location>
        <begin position="2"/>
        <end position="676"/>
    </location>
</feature>
<feature type="topological domain" description="Mitochondrial intermembrane" evidence="7">
    <location>
        <begin position="2"/>
        <end position="328"/>
    </location>
</feature>
<feature type="transmembrane region" description="Helical; Name=1" evidence="1">
    <location>
        <begin position="329"/>
        <end position="346"/>
    </location>
</feature>
<feature type="topological domain" description="Mitochondrial matrix" evidence="7">
    <location>
        <begin position="347"/>
        <end position="389"/>
    </location>
</feature>
<feature type="transmembrane region" description="Helical; Name=2" evidence="1">
    <location>
        <begin position="390"/>
        <end position="409"/>
    </location>
</feature>
<feature type="topological domain" description="Mitochondrial intermembrane" evidence="7">
    <location>
        <begin position="410"/>
        <end position="432"/>
    </location>
</feature>
<feature type="transmembrane region" description="Helical; Name=3" evidence="1">
    <location>
        <begin position="433"/>
        <end position="446"/>
    </location>
</feature>
<feature type="topological domain" description="Mitochondrial matrix" evidence="7">
    <location>
        <begin position="447"/>
        <end position="481"/>
    </location>
</feature>
<feature type="transmembrane region" description="Helical; Name=4" evidence="1">
    <location>
        <begin position="482"/>
        <end position="501"/>
    </location>
</feature>
<feature type="topological domain" description="Mitochondrial intermembrane" evidence="7">
    <location>
        <begin position="502"/>
        <end position="520"/>
    </location>
</feature>
<feature type="transmembrane region" description="Helical; Name=5" evidence="1">
    <location>
        <begin position="521"/>
        <end position="538"/>
    </location>
</feature>
<feature type="topological domain" description="Mitochondrial matrix" evidence="7">
    <location>
        <begin position="539"/>
        <end position="577"/>
    </location>
</feature>
<feature type="transmembrane region" description="Helical; Name=6" evidence="1">
    <location>
        <begin position="578"/>
        <end position="597"/>
    </location>
</feature>
<feature type="topological domain" description="Mitochondrial intermembrane" evidence="7">
    <location>
        <begin position="598"/>
        <end position="676"/>
    </location>
</feature>
<feature type="domain" description="EF-hand 1" evidence="7">
    <location>
        <begin position="65"/>
        <end position="76"/>
    </location>
</feature>
<feature type="domain" description="EF-hand 2" evidence="4">
    <location>
        <begin position="86"/>
        <end position="121"/>
    </location>
</feature>
<feature type="domain" description="EF-hand 3" evidence="7">
    <location>
        <begin position="125"/>
        <end position="155"/>
    </location>
</feature>
<feature type="domain" description="EF-hand 4" evidence="4">
    <location>
        <begin position="157"/>
        <end position="192"/>
    </location>
</feature>
<feature type="repeat" description="Solcar 1" evidence="3">
    <location>
        <begin position="323"/>
        <end position="415"/>
    </location>
</feature>
<feature type="repeat" description="Solcar 2" evidence="3">
    <location>
        <begin position="423"/>
        <end position="507"/>
    </location>
</feature>
<feature type="repeat" description="Solcar 3" evidence="3">
    <location>
        <begin position="515"/>
        <end position="603"/>
    </location>
</feature>
<feature type="region of interest" description="Regulatory N-terminal domain" evidence="1">
    <location>
        <begin position="2"/>
        <end position="293"/>
    </location>
</feature>
<feature type="region of interest" description="Linker loop domain" evidence="1">
    <location>
        <begin position="294"/>
        <end position="309"/>
    </location>
</feature>
<feature type="region of interest" description="Carrier domain" evidence="1">
    <location>
        <begin position="319"/>
        <end position="611"/>
    </location>
</feature>
<feature type="region of interest" description="C-terminal domain" evidence="1">
    <location>
        <begin position="612"/>
        <end position="674"/>
    </location>
</feature>
<feature type="binding site" evidence="1">
    <location>
        <position position="65"/>
    </location>
    <ligand>
        <name>Ca(2+)</name>
        <dbReference type="ChEBI" id="CHEBI:29108"/>
    </ligand>
</feature>
<feature type="binding site" evidence="1">
    <location>
        <position position="67"/>
    </location>
    <ligand>
        <name>Ca(2+)</name>
        <dbReference type="ChEBI" id="CHEBI:29108"/>
    </ligand>
</feature>
<feature type="binding site" evidence="1">
    <location>
        <position position="69"/>
    </location>
    <ligand>
        <name>Ca(2+)</name>
        <dbReference type="ChEBI" id="CHEBI:29108"/>
    </ligand>
</feature>
<feature type="binding site" evidence="1">
    <location>
        <position position="71"/>
    </location>
    <ligand>
        <name>Ca(2+)</name>
        <dbReference type="ChEBI" id="CHEBI:29108"/>
    </ligand>
</feature>
<feature type="binding site" evidence="1">
    <location>
        <position position="76"/>
    </location>
    <ligand>
        <name>Ca(2+)</name>
        <dbReference type="ChEBI" id="CHEBI:29108"/>
    </ligand>
</feature>
<feature type="modified residue" description="N-acetylalanine" evidence="1">
    <location>
        <position position="2"/>
    </location>
</feature>
<protein>
    <recommendedName>
        <fullName evidence="8 9">Electrogenic aspartate/glutamate antiporter SLC25A12, mitochondrial</fullName>
    </recommendedName>
    <alternativeName>
        <fullName evidence="11">Solute carrier family 25 member 12</fullName>
    </alternativeName>
</protein>
<comment type="function">
    <text evidence="1 5 6">Mitochondrial electrogenic aspartate/glutamate antiporter that favors efflux of aspartate and entry of glutamate and proton within the mitochondria as part of the malate-aspartate shuttle (PubMed:4436323). Also mediates the uptake of L-cysteinesulfinate (3-sulfino-L-alanine) by mitochondria in exchange of L-glutamate and proton (PubMed:486467). Can also exchange L-cysteinesulfinate with aspartate in their anionic form without any proton translocation (PubMed:486467). Lacks transport activity towards L-glutamine or gamma-aminobutyric acid (GABA) (By similarity).</text>
</comment>
<comment type="catalytic activity">
    <reaction evidence="5">
        <text>L-aspartate(in) + L-glutamate(out) + H(+)(out) = L-aspartate(out) + L-glutamate(in) + H(+)(in)</text>
        <dbReference type="Rhea" id="RHEA:70783"/>
        <dbReference type="ChEBI" id="CHEBI:15378"/>
        <dbReference type="ChEBI" id="CHEBI:29985"/>
        <dbReference type="ChEBI" id="CHEBI:29991"/>
    </reaction>
</comment>
<comment type="catalytic activity">
    <reaction evidence="6">
        <text>3-sulfino-L-alanine(out) + L-glutamate(in) + H(+)(in) = 3-sulfino-L-alanine(in) + L-glutamate(out) + H(+)(out)</text>
        <dbReference type="Rhea" id="RHEA:70967"/>
        <dbReference type="ChEBI" id="CHEBI:15378"/>
        <dbReference type="ChEBI" id="CHEBI:29985"/>
        <dbReference type="ChEBI" id="CHEBI:61085"/>
    </reaction>
</comment>
<comment type="catalytic activity">
    <reaction evidence="6">
        <text>3-sulfino-L-alanine(out) + L-aspartate(in) = 3-sulfino-L-alanine(in) + L-aspartate(out)</text>
        <dbReference type="Rhea" id="RHEA:70975"/>
        <dbReference type="ChEBI" id="CHEBI:29991"/>
        <dbReference type="ChEBI" id="CHEBI:61085"/>
    </reaction>
</comment>
<comment type="activity regulation">
    <text evidence="6">L-aspartate and 3-sulfino-L-alanine uptake are both inhibited by glisoxepide.</text>
</comment>
<comment type="subunit">
    <text evidence="1">Homodimer (via N-terminus).</text>
</comment>
<comment type="subcellular location">
    <subcellularLocation>
        <location evidence="8 9">Mitochondrion inner membrane</location>
        <topology evidence="2">Multi-pass membrane protein</topology>
    </subcellularLocation>
</comment>
<comment type="domain">
    <text evidence="1">Upon calcium binding, the EF-hand-containing regulatory N-terminal domain binds to the C-terminal domain, opening a vestibule which allows the substrates to be translocated through the carrier domain. In the absence of calcium, the linker loop domain may close the vestibule, which may prevent substrates from entering the carrier domain.</text>
</comment>
<comment type="similarity">
    <text evidence="7">Belongs to the mitochondrial carrier (TC 2.A.29) family.</text>
</comment>
<sequence length="676" mass="74361">MAVKVHTTKRGDPHELRNIFLQYASTEVDGEHYMTPEDFVQRYLGLYNDPNSNPKIVQLLAGVADQTKDGLISYQEFLAFESVLCAPDSMFIVAFQLFDKSGNGEVTFENVKEIFGQTIIHHHIPFNWDCEFIRLHFGHNRKKHLNYVEFTQFLQELQLEHARQAFALKDKSKSGMISGLDFSDVMVTIRSHMLTPFVEENLVSAAGGSTSHQVSFSYFNAFNSLLNNMELVRKIYSTLAGTRKDIEVTKEEFASAITYGVVTPINVGILYFINNVHISTGRLTLADIERIAPLAEGALPYNLAELQRQQSPGLGRPIWLQIAESAYRFTLGSVAGAVGATAVYPIDLVKTRMQNQRGTGSVVGELMYKNSFDCFKKVLRYEGFFGLYRGLIPQLIGVAPEKAIKLTVNDFVRDKFTRRDGSIPLPAEILAGGCAGGSQVIFTNPLEIVKIRLQVAGEITTGPRVSALNVLQDLGLFGLYKGAKACFLRDIPFSAIYFPVYAHCKLLLADENGHVGGINLLTAGAMAGVPAASLVTPADVIKTRLQVAARAGQTTYSGVIDCFRKILREEGPSAFWKGTAARVFRSSPQFGVTLVTYELLQRWFYIDFGGLKPSGSEPTPKSRIADLPPANPDHIGGYRLATATFAGIENKFGLYLPKFKSPGVAAAQPKVAAAAQ</sequence>